<dbReference type="EMBL" id="CU329670">
    <property type="protein sequence ID" value="CAB58229.2"/>
    <property type="molecule type" value="Genomic_DNA"/>
</dbReference>
<dbReference type="PIR" id="T39209">
    <property type="entry name" value="T39209"/>
</dbReference>
<dbReference type="RefSeq" id="NP_594575.2">
    <property type="nucleotide sequence ID" value="NM_001020004.2"/>
</dbReference>
<dbReference type="SMR" id="Q9UT14"/>
<dbReference type="BioGRID" id="279311">
    <property type="interactions" value="4"/>
</dbReference>
<dbReference type="iPTMnet" id="Q9UT14"/>
<dbReference type="PaxDb" id="4896-SPAC9E9.17c.1"/>
<dbReference type="EnsemblFungi" id="SPAC9E9.17c.1">
    <property type="protein sequence ID" value="SPAC9E9.17c.1:pep"/>
    <property type="gene ID" value="SPAC9E9.17c"/>
</dbReference>
<dbReference type="KEGG" id="spo:2542866"/>
<dbReference type="PomBase" id="SPAC9E9.17c"/>
<dbReference type="VEuPathDB" id="FungiDB:SPAC9E9.17c"/>
<dbReference type="HOGENOM" id="CLU_2723637_0_0_1"/>
<dbReference type="InParanoid" id="Q9UT14"/>
<dbReference type="PRO" id="PR:Q9UT14"/>
<dbReference type="Proteomes" id="UP000002485">
    <property type="component" value="Chromosome I"/>
</dbReference>
<protein>
    <recommendedName>
        <fullName>Uncharacterized protein C9E9.17c</fullName>
    </recommendedName>
</protein>
<gene>
    <name type="ORF">SPAC9E9.17c</name>
</gene>
<keyword id="KW-1185">Reference proteome</keyword>
<keyword id="KW-0732">Signal</keyword>
<proteinExistence type="inferred from homology"/>
<name>YF1H_SCHPO</name>
<reference key="1">
    <citation type="journal article" date="2002" name="Nature">
        <title>The genome sequence of Schizosaccharomyces pombe.</title>
        <authorList>
            <person name="Wood V."/>
            <person name="Gwilliam R."/>
            <person name="Rajandream M.A."/>
            <person name="Lyne M.H."/>
            <person name="Lyne R."/>
            <person name="Stewart A."/>
            <person name="Sgouros J.G."/>
            <person name="Peat N."/>
            <person name="Hayles J."/>
            <person name="Baker S.G."/>
            <person name="Basham D."/>
            <person name="Bowman S."/>
            <person name="Brooks K."/>
            <person name="Brown D."/>
            <person name="Brown S."/>
            <person name="Chillingworth T."/>
            <person name="Churcher C.M."/>
            <person name="Collins M."/>
            <person name="Connor R."/>
            <person name="Cronin A."/>
            <person name="Davis P."/>
            <person name="Feltwell T."/>
            <person name="Fraser A."/>
            <person name="Gentles S."/>
            <person name="Goble A."/>
            <person name="Hamlin N."/>
            <person name="Harris D.E."/>
            <person name="Hidalgo J."/>
            <person name="Hodgson G."/>
            <person name="Holroyd S."/>
            <person name="Hornsby T."/>
            <person name="Howarth S."/>
            <person name="Huckle E.J."/>
            <person name="Hunt S."/>
            <person name="Jagels K."/>
            <person name="James K.D."/>
            <person name="Jones L."/>
            <person name="Jones M."/>
            <person name="Leather S."/>
            <person name="McDonald S."/>
            <person name="McLean J."/>
            <person name="Mooney P."/>
            <person name="Moule S."/>
            <person name="Mungall K.L."/>
            <person name="Murphy L.D."/>
            <person name="Niblett D."/>
            <person name="Odell C."/>
            <person name="Oliver K."/>
            <person name="O'Neil S."/>
            <person name="Pearson D."/>
            <person name="Quail M.A."/>
            <person name="Rabbinowitsch E."/>
            <person name="Rutherford K.M."/>
            <person name="Rutter S."/>
            <person name="Saunders D."/>
            <person name="Seeger K."/>
            <person name="Sharp S."/>
            <person name="Skelton J."/>
            <person name="Simmonds M.N."/>
            <person name="Squares R."/>
            <person name="Squares S."/>
            <person name="Stevens K."/>
            <person name="Taylor K."/>
            <person name="Taylor R.G."/>
            <person name="Tivey A."/>
            <person name="Walsh S.V."/>
            <person name="Warren T."/>
            <person name="Whitehead S."/>
            <person name="Woodward J.R."/>
            <person name="Volckaert G."/>
            <person name="Aert R."/>
            <person name="Robben J."/>
            <person name="Grymonprez B."/>
            <person name="Weltjens I."/>
            <person name="Vanstreels E."/>
            <person name="Rieger M."/>
            <person name="Schaefer M."/>
            <person name="Mueller-Auer S."/>
            <person name="Gabel C."/>
            <person name="Fuchs M."/>
            <person name="Duesterhoeft A."/>
            <person name="Fritzc C."/>
            <person name="Holzer E."/>
            <person name="Moestl D."/>
            <person name="Hilbert H."/>
            <person name="Borzym K."/>
            <person name="Langer I."/>
            <person name="Beck A."/>
            <person name="Lehrach H."/>
            <person name="Reinhardt R."/>
            <person name="Pohl T.M."/>
            <person name="Eger P."/>
            <person name="Zimmermann W."/>
            <person name="Wedler H."/>
            <person name="Wambutt R."/>
            <person name="Purnelle B."/>
            <person name="Goffeau A."/>
            <person name="Cadieu E."/>
            <person name="Dreano S."/>
            <person name="Gloux S."/>
            <person name="Lelaure V."/>
            <person name="Mottier S."/>
            <person name="Galibert F."/>
            <person name="Aves S.J."/>
            <person name="Xiang Z."/>
            <person name="Hunt C."/>
            <person name="Moore K."/>
            <person name="Hurst S.M."/>
            <person name="Lucas M."/>
            <person name="Rochet M."/>
            <person name="Gaillardin C."/>
            <person name="Tallada V.A."/>
            <person name="Garzon A."/>
            <person name="Thode G."/>
            <person name="Daga R.R."/>
            <person name="Cruzado L."/>
            <person name="Jimenez J."/>
            <person name="Sanchez M."/>
            <person name="del Rey F."/>
            <person name="Benito J."/>
            <person name="Dominguez A."/>
            <person name="Revuelta J.L."/>
            <person name="Moreno S."/>
            <person name="Armstrong J."/>
            <person name="Forsburg S.L."/>
            <person name="Cerutti L."/>
            <person name="Lowe T."/>
            <person name="McCombie W.R."/>
            <person name="Paulsen I."/>
            <person name="Potashkin J."/>
            <person name="Shpakovski G.V."/>
            <person name="Ussery D."/>
            <person name="Barrell B.G."/>
            <person name="Nurse P."/>
        </authorList>
    </citation>
    <scope>NUCLEOTIDE SEQUENCE [LARGE SCALE GENOMIC DNA]</scope>
    <source>
        <strain>972 / ATCC 24843</strain>
    </source>
</reference>
<feature type="signal peptide" evidence="1">
    <location>
        <begin position="1"/>
        <end position="17"/>
    </location>
</feature>
<feature type="chain" id="PRO_0000042792" description="Uncharacterized protein C9E9.17c">
    <location>
        <begin position="18"/>
        <end position="72"/>
    </location>
</feature>
<accession>Q9UT14</accession>
<organism>
    <name type="scientific">Schizosaccharomyces pombe (strain 972 / ATCC 24843)</name>
    <name type="common">Fission yeast</name>
    <dbReference type="NCBI Taxonomy" id="284812"/>
    <lineage>
        <taxon>Eukaryota</taxon>
        <taxon>Fungi</taxon>
        <taxon>Dikarya</taxon>
        <taxon>Ascomycota</taxon>
        <taxon>Taphrinomycotina</taxon>
        <taxon>Schizosaccharomycetes</taxon>
        <taxon>Schizosaccharomycetales</taxon>
        <taxon>Schizosaccharomycetaceae</taxon>
        <taxon>Schizosaccharomyces</taxon>
    </lineage>
</organism>
<sequence>MSLGLAIAVGIVLGVVASSLCNKNNHLNRSREFSVIQKDEELNVLEINFNDFYRTTLNVGELSMSTRKTNNC</sequence>
<evidence type="ECO:0000255" key="1"/>